<reference key="1">
    <citation type="journal article" date="2006" name="J. Bacteriol.">
        <title>Complete genome sequence of Yersinia pestis strains Antiqua and Nepal516: evidence of gene reduction in an emerging pathogen.</title>
        <authorList>
            <person name="Chain P.S.G."/>
            <person name="Hu P."/>
            <person name="Malfatti S.A."/>
            <person name="Radnedge L."/>
            <person name="Larimer F."/>
            <person name="Vergez L.M."/>
            <person name="Worsham P."/>
            <person name="Chu M.C."/>
            <person name="Andersen G.L."/>
        </authorList>
    </citation>
    <scope>NUCLEOTIDE SEQUENCE [LARGE SCALE GENOMIC DNA]</scope>
    <source>
        <strain>Antiqua</strain>
    </source>
</reference>
<keyword id="KW-0001">2Fe-2S</keyword>
<keyword id="KW-0004">4Fe-4S</keyword>
<keyword id="KW-0093">Biotin biosynthesis</keyword>
<keyword id="KW-0408">Iron</keyword>
<keyword id="KW-0411">Iron-sulfur</keyword>
<keyword id="KW-0479">Metal-binding</keyword>
<keyword id="KW-0949">S-adenosyl-L-methionine</keyword>
<keyword id="KW-0808">Transferase</keyword>
<gene>
    <name evidence="1" type="primary">bioB</name>
    <name type="ordered locus">YPA_1058</name>
</gene>
<feature type="chain" id="PRO_0000381721" description="Biotin synthase">
    <location>
        <begin position="1"/>
        <end position="345"/>
    </location>
</feature>
<feature type="domain" description="Radical SAM core" evidence="2">
    <location>
        <begin position="38"/>
        <end position="256"/>
    </location>
</feature>
<feature type="binding site" evidence="1">
    <location>
        <position position="53"/>
    </location>
    <ligand>
        <name>[4Fe-4S] cluster</name>
        <dbReference type="ChEBI" id="CHEBI:49883"/>
        <note>4Fe-4S-S-AdoMet</note>
    </ligand>
</feature>
<feature type="binding site" evidence="1">
    <location>
        <position position="57"/>
    </location>
    <ligand>
        <name>[4Fe-4S] cluster</name>
        <dbReference type="ChEBI" id="CHEBI:49883"/>
        <note>4Fe-4S-S-AdoMet</note>
    </ligand>
</feature>
<feature type="binding site" evidence="1">
    <location>
        <position position="60"/>
    </location>
    <ligand>
        <name>[4Fe-4S] cluster</name>
        <dbReference type="ChEBI" id="CHEBI:49883"/>
        <note>4Fe-4S-S-AdoMet</note>
    </ligand>
</feature>
<feature type="binding site" evidence="1">
    <location>
        <position position="97"/>
    </location>
    <ligand>
        <name>[2Fe-2S] cluster</name>
        <dbReference type="ChEBI" id="CHEBI:190135"/>
    </ligand>
</feature>
<feature type="binding site" evidence="1">
    <location>
        <position position="128"/>
    </location>
    <ligand>
        <name>[2Fe-2S] cluster</name>
        <dbReference type="ChEBI" id="CHEBI:190135"/>
    </ligand>
</feature>
<feature type="binding site" evidence="1">
    <location>
        <position position="188"/>
    </location>
    <ligand>
        <name>[2Fe-2S] cluster</name>
        <dbReference type="ChEBI" id="CHEBI:190135"/>
    </ligand>
</feature>
<feature type="binding site" evidence="1">
    <location>
        <position position="260"/>
    </location>
    <ligand>
        <name>[2Fe-2S] cluster</name>
        <dbReference type="ChEBI" id="CHEBI:190135"/>
    </ligand>
</feature>
<comment type="function">
    <text evidence="1">Catalyzes the conversion of dethiobiotin (DTB) to biotin by the insertion of a sulfur atom into dethiobiotin via a radical-based mechanism.</text>
</comment>
<comment type="catalytic activity">
    <reaction evidence="1">
        <text>(4R,5S)-dethiobiotin + (sulfur carrier)-SH + 2 reduced [2Fe-2S]-[ferredoxin] + 2 S-adenosyl-L-methionine = (sulfur carrier)-H + biotin + 2 5'-deoxyadenosine + 2 L-methionine + 2 oxidized [2Fe-2S]-[ferredoxin]</text>
        <dbReference type="Rhea" id="RHEA:22060"/>
        <dbReference type="Rhea" id="RHEA-COMP:10000"/>
        <dbReference type="Rhea" id="RHEA-COMP:10001"/>
        <dbReference type="Rhea" id="RHEA-COMP:14737"/>
        <dbReference type="Rhea" id="RHEA-COMP:14739"/>
        <dbReference type="ChEBI" id="CHEBI:17319"/>
        <dbReference type="ChEBI" id="CHEBI:29917"/>
        <dbReference type="ChEBI" id="CHEBI:33737"/>
        <dbReference type="ChEBI" id="CHEBI:33738"/>
        <dbReference type="ChEBI" id="CHEBI:57586"/>
        <dbReference type="ChEBI" id="CHEBI:57844"/>
        <dbReference type="ChEBI" id="CHEBI:59789"/>
        <dbReference type="ChEBI" id="CHEBI:64428"/>
        <dbReference type="ChEBI" id="CHEBI:149473"/>
        <dbReference type="EC" id="2.8.1.6"/>
    </reaction>
</comment>
<comment type="cofactor">
    <cofactor evidence="1">
        <name>[4Fe-4S] cluster</name>
        <dbReference type="ChEBI" id="CHEBI:49883"/>
    </cofactor>
    <text evidence="1">Binds 1 [4Fe-4S] cluster. The cluster is coordinated with 3 cysteines and an exchangeable S-adenosyl-L-methionine.</text>
</comment>
<comment type="cofactor">
    <cofactor evidence="1">
        <name>[2Fe-2S] cluster</name>
        <dbReference type="ChEBI" id="CHEBI:190135"/>
    </cofactor>
    <text evidence="1">Binds 1 [2Fe-2S] cluster. The cluster is coordinated with 3 cysteines and 1 arginine.</text>
</comment>
<comment type="pathway">
    <text evidence="1">Cofactor biosynthesis; biotin biosynthesis; biotin from 7,8-diaminononanoate: step 2/2.</text>
</comment>
<comment type="subunit">
    <text evidence="1">Homodimer.</text>
</comment>
<comment type="similarity">
    <text evidence="1">Belongs to the radical SAM superfamily. Biotin synthase family.</text>
</comment>
<accession>Q1C947</accession>
<organism>
    <name type="scientific">Yersinia pestis bv. Antiqua (strain Antiqua)</name>
    <dbReference type="NCBI Taxonomy" id="360102"/>
    <lineage>
        <taxon>Bacteria</taxon>
        <taxon>Pseudomonadati</taxon>
        <taxon>Pseudomonadota</taxon>
        <taxon>Gammaproteobacteria</taxon>
        <taxon>Enterobacterales</taxon>
        <taxon>Yersiniaceae</taxon>
        <taxon>Yersinia</taxon>
    </lineage>
</organism>
<name>BIOB_YERPA</name>
<protein>
    <recommendedName>
        <fullName evidence="1">Biotin synthase</fullName>
        <ecNumber evidence="1">2.8.1.6</ecNumber>
    </recommendedName>
</protein>
<dbReference type="EC" id="2.8.1.6" evidence="1"/>
<dbReference type="EMBL" id="CP000308">
    <property type="protein sequence ID" value="ABG13025.1"/>
    <property type="molecule type" value="Genomic_DNA"/>
</dbReference>
<dbReference type="RefSeq" id="WP_002210762.1">
    <property type="nucleotide sequence ID" value="NZ_CP009906.1"/>
</dbReference>
<dbReference type="SMR" id="Q1C947"/>
<dbReference type="GeneID" id="57977290"/>
<dbReference type="KEGG" id="ypa:YPA_1058"/>
<dbReference type="UniPathway" id="UPA00078">
    <property type="reaction ID" value="UER00162"/>
</dbReference>
<dbReference type="Proteomes" id="UP000001971">
    <property type="component" value="Chromosome"/>
</dbReference>
<dbReference type="GO" id="GO:0051537">
    <property type="term" value="F:2 iron, 2 sulfur cluster binding"/>
    <property type="evidence" value="ECO:0007669"/>
    <property type="project" value="UniProtKB-KW"/>
</dbReference>
<dbReference type="GO" id="GO:0051539">
    <property type="term" value="F:4 iron, 4 sulfur cluster binding"/>
    <property type="evidence" value="ECO:0007669"/>
    <property type="project" value="UniProtKB-KW"/>
</dbReference>
<dbReference type="GO" id="GO:0004076">
    <property type="term" value="F:biotin synthase activity"/>
    <property type="evidence" value="ECO:0007669"/>
    <property type="project" value="UniProtKB-UniRule"/>
</dbReference>
<dbReference type="GO" id="GO:0005506">
    <property type="term" value="F:iron ion binding"/>
    <property type="evidence" value="ECO:0007669"/>
    <property type="project" value="UniProtKB-UniRule"/>
</dbReference>
<dbReference type="GO" id="GO:0009102">
    <property type="term" value="P:biotin biosynthetic process"/>
    <property type="evidence" value="ECO:0007669"/>
    <property type="project" value="UniProtKB-UniRule"/>
</dbReference>
<dbReference type="CDD" id="cd01335">
    <property type="entry name" value="Radical_SAM"/>
    <property type="match status" value="1"/>
</dbReference>
<dbReference type="FunFam" id="3.20.20.70:FF:000011">
    <property type="entry name" value="Biotin synthase"/>
    <property type="match status" value="1"/>
</dbReference>
<dbReference type="Gene3D" id="3.20.20.70">
    <property type="entry name" value="Aldolase class I"/>
    <property type="match status" value="1"/>
</dbReference>
<dbReference type="HAMAP" id="MF_01694">
    <property type="entry name" value="BioB"/>
    <property type="match status" value="1"/>
</dbReference>
<dbReference type="InterPro" id="IPR013785">
    <property type="entry name" value="Aldolase_TIM"/>
</dbReference>
<dbReference type="InterPro" id="IPR010722">
    <property type="entry name" value="BATS_dom"/>
</dbReference>
<dbReference type="InterPro" id="IPR002684">
    <property type="entry name" value="Biotin_synth/BioAB"/>
</dbReference>
<dbReference type="InterPro" id="IPR024177">
    <property type="entry name" value="Biotin_synthase"/>
</dbReference>
<dbReference type="InterPro" id="IPR006638">
    <property type="entry name" value="Elp3/MiaA/NifB-like_rSAM"/>
</dbReference>
<dbReference type="InterPro" id="IPR007197">
    <property type="entry name" value="rSAM"/>
</dbReference>
<dbReference type="NCBIfam" id="TIGR00433">
    <property type="entry name" value="bioB"/>
    <property type="match status" value="1"/>
</dbReference>
<dbReference type="PANTHER" id="PTHR22976">
    <property type="entry name" value="BIOTIN SYNTHASE"/>
    <property type="match status" value="1"/>
</dbReference>
<dbReference type="PANTHER" id="PTHR22976:SF2">
    <property type="entry name" value="BIOTIN SYNTHASE, MITOCHONDRIAL"/>
    <property type="match status" value="1"/>
</dbReference>
<dbReference type="Pfam" id="PF06968">
    <property type="entry name" value="BATS"/>
    <property type="match status" value="1"/>
</dbReference>
<dbReference type="Pfam" id="PF04055">
    <property type="entry name" value="Radical_SAM"/>
    <property type="match status" value="1"/>
</dbReference>
<dbReference type="PIRSF" id="PIRSF001619">
    <property type="entry name" value="Biotin_synth"/>
    <property type="match status" value="1"/>
</dbReference>
<dbReference type="SFLD" id="SFLDF00272">
    <property type="entry name" value="biotin_synthase"/>
    <property type="match status" value="1"/>
</dbReference>
<dbReference type="SFLD" id="SFLDS00029">
    <property type="entry name" value="Radical_SAM"/>
    <property type="match status" value="1"/>
</dbReference>
<dbReference type="SMART" id="SM00876">
    <property type="entry name" value="BATS"/>
    <property type="match status" value="1"/>
</dbReference>
<dbReference type="SMART" id="SM00729">
    <property type="entry name" value="Elp3"/>
    <property type="match status" value="1"/>
</dbReference>
<dbReference type="SUPFAM" id="SSF102114">
    <property type="entry name" value="Radical SAM enzymes"/>
    <property type="match status" value="1"/>
</dbReference>
<dbReference type="PROSITE" id="PS51918">
    <property type="entry name" value="RADICAL_SAM"/>
    <property type="match status" value="1"/>
</dbReference>
<sequence>MATYHHWTVGQALALFDKPLLELLFEAQQVHRQHFDPRQVQVSTLLSIKTGACPEDCKYCPQSSRYKTGLESERLMQVEQVLESAKKAKAAGSTRFCMGAAWKNPHERDMPYLAKMVEGVKALGMETCMTLGSLSKQQAHRLADAGLDYYNHNLDTSPEFYGSIITTRSYQERLDTLNEVRDAGIKVCSGGIVGLGETVRDRAGLLVQLANLPKPPESVPINMLVKVKGTPLENNAEVDAFEFIRTIAVARIMMPSSYVRLSAGREQMNEQTQAMCFMAGANSIFYGCKLLTTPNPDEDKDLQLFRKLGLNPQQTATSHGDREQQQALTEQLLHGDTAQFYNAAV</sequence>
<proteinExistence type="inferred from homology"/>
<evidence type="ECO:0000255" key="1">
    <source>
        <dbReference type="HAMAP-Rule" id="MF_01694"/>
    </source>
</evidence>
<evidence type="ECO:0000255" key="2">
    <source>
        <dbReference type="PROSITE-ProRule" id="PRU01266"/>
    </source>
</evidence>